<gene>
    <name evidence="1" type="primary">cynS</name>
    <name type="ordered locus">PSPTO_1930</name>
</gene>
<accession>Q885A6</accession>
<proteinExistence type="inferred from homology"/>
<name>CYNS_PSESM</name>
<sequence length="155" mass="17059">MPHSNISSTPRQQLTERVLQAKAANNLTWASLAEDTGLSVVYVTAALLGQHPLPQAVAEVVAERLGLDRDAVVELQTIPLRGHVEDVSSDPTIYRFHEMVQVYGTTLKALVHEQFGDGIISAINFKLDIRKVEDPEGGERAVITLDGKFLPYKPF</sequence>
<keyword id="KW-0456">Lyase</keyword>
<keyword id="KW-1185">Reference proteome</keyword>
<dbReference type="EC" id="4.2.1.104" evidence="1"/>
<dbReference type="EMBL" id="AE016853">
    <property type="protein sequence ID" value="AAO55448.1"/>
    <property type="molecule type" value="Genomic_DNA"/>
</dbReference>
<dbReference type="RefSeq" id="NP_791753.1">
    <property type="nucleotide sequence ID" value="NC_004578.1"/>
</dbReference>
<dbReference type="RefSeq" id="WP_011103774.1">
    <property type="nucleotide sequence ID" value="NC_004578.1"/>
</dbReference>
<dbReference type="SMR" id="Q885A6"/>
<dbReference type="STRING" id="223283.PSPTO_1930"/>
<dbReference type="GeneID" id="1183575"/>
<dbReference type="KEGG" id="pst:PSPTO_1930"/>
<dbReference type="PATRIC" id="fig|223283.9.peg.1960"/>
<dbReference type="eggNOG" id="COG1513">
    <property type="taxonomic scope" value="Bacteria"/>
</dbReference>
<dbReference type="HOGENOM" id="CLU_103452_1_1_6"/>
<dbReference type="OrthoDB" id="9785870at2"/>
<dbReference type="PhylomeDB" id="Q885A6"/>
<dbReference type="Proteomes" id="UP000002515">
    <property type="component" value="Chromosome"/>
</dbReference>
<dbReference type="GO" id="GO:0008824">
    <property type="term" value="F:cyanate hydratase activity"/>
    <property type="evidence" value="ECO:0007669"/>
    <property type="project" value="UniProtKB-UniRule"/>
</dbReference>
<dbReference type="GO" id="GO:0003677">
    <property type="term" value="F:DNA binding"/>
    <property type="evidence" value="ECO:0007669"/>
    <property type="project" value="InterPro"/>
</dbReference>
<dbReference type="GO" id="GO:0009439">
    <property type="term" value="P:cyanate metabolic process"/>
    <property type="evidence" value="ECO:0007669"/>
    <property type="project" value="UniProtKB-UniRule"/>
</dbReference>
<dbReference type="CDD" id="cd00559">
    <property type="entry name" value="Cyanase_C"/>
    <property type="match status" value="1"/>
</dbReference>
<dbReference type="Gene3D" id="3.30.1160.10">
    <property type="entry name" value="Cyanate lyase, C-terminal domain"/>
    <property type="match status" value="1"/>
</dbReference>
<dbReference type="Gene3D" id="1.10.260.40">
    <property type="entry name" value="lambda repressor-like DNA-binding domains"/>
    <property type="match status" value="1"/>
</dbReference>
<dbReference type="HAMAP" id="MF_00535">
    <property type="entry name" value="Cyanate_hydrat"/>
    <property type="match status" value="1"/>
</dbReference>
<dbReference type="InterPro" id="IPR008076">
    <property type="entry name" value="Cyanase"/>
</dbReference>
<dbReference type="InterPro" id="IPR003712">
    <property type="entry name" value="Cyanate_lyase_C"/>
</dbReference>
<dbReference type="InterPro" id="IPR036581">
    <property type="entry name" value="Cyanate_lyase_C_sf"/>
</dbReference>
<dbReference type="InterPro" id="IPR048564">
    <property type="entry name" value="CYNS_N"/>
</dbReference>
<dbReference type="InterPro" id="IPR010982">
    <property type="entry name" value="Lambda_DNA-bd_dom_sf"/>
</dbReference>
<dbReference type="NCBIfam" id="TIGR00673">
    <property type="entry name" value="cynS"/>
    <property type="match status" value="1"/>
</dbReference>
<dbReference type="NCBIfam" id="NF002773">
    <property type="entry name" value="PRK02866.1"/>
    <property type="match status" value="1"/>
</dbReference>
<dbReference type="PANTHER" id="PTHR34186">
    <property type="entry name" value="CYANATE HYDRATASE"/>
    <property type="match status" value="1"/>
</dbReference>
<dbReference type="PANTHER" id="PTHR34186:SF2">
    <property type="entry name" value="CYANATE HYDRATASE"/>
    <property type="match status" value="1"/>
</dbReference>
<dbReference type="Pfam" id="PF02560">
    <property type="entry name" value="Cyanate_lyase"/>
    <property type="match status" value="1"/>
</dbReference>
<dbReference type="Pfam" id="PF21291">
    <property type="entry name" value="CYNS_N"/>
    <property type="match status" value="1"/>
</dbReference>
<dbReference type="PIRSF" id="PIRSF001263">
    <property type="entry name" value="Cyanate_hydratas"/>
    <property type="match status" value="1"/>
</dbReference>
<dbReference type="PRINTS" id="PR01693">
    <property type="entry name" value="CYANASE"/>
</dbReference>
<dbReference type="SMART" id="SM01116">
    <property type="entry name" value="Cyanate_lyase"/>
    <property type="match status" value="1"/>
</dbReference>
<dbReference type="SUPFAM" id="SSF55234">
    <property type="entry name" value="Cyanase C-terminal domain"/>
    <property type="match status" value="1"/>
</dbReference>
<dbReference type="SUPFAM" id="SSF47413">
    <property type="entry name" value="lambda repressor-like DNA-binding domains"/>
    <property type="match status" value="1"/>
</dbReference>
<protein>
    <recommendedName>
        <fullName evidence="1">Cyanate hydratase</fullName>
        <shortName evidence="1">Cyanase</shortName>
        <ecNumber evidence="1">4.2.1.104</ecNumber>
    </recommendedName>
    <alternativeName>
        <fullName evidence="1">Cyanate hydrolase</fullName>
    </alternativeName>
    <alternativeName>
        <fullName evidence="1">Cyanate lyase</fullName>
    </alternativeName>
</protein>
<organism>
    <name type="scientific">Pseudomonas syringae pv. tomato (strain ATCC BAA-871 / DC3000)</name>
    <dbReference type="NCBI Taxonomy" id="223283"/>
    <lineage>
        <taxon>Bacteria</taxon>
        <taxon>Pseudomonadati</taxon>
        <taxon>Pseudomonadota</taxon>
        <taxon>Gammaproteobacteria</taxon>
        <taxon>Pseudomonadales</taxon>
        <taxon>Pseudomonadaceae</taxon>
        <taxon>Pseudomonas</taxon>
    </lineage>
</organism>
<reference key="1">
    <citation type="journal article" date="2003" name="Proc. Natl. Acad. Sci. U.S.A.">
        <title>The complete genome sequence of the Arabidopsis and tomato pathogen Pseudomonas syringae pv. tomato DC3000.</title>
        <authorList>
            <person name="Buell C.R."/>
            <person name="Joardar V."/>
            <person name="Lindeberg M."/>
            <person name="Selengut J."/>
            <person name="Paulsen I.T."/>
            <person name="Gwinn M.L."/>
            <person name="Dodson R.J."/>
            <person name="DeBoy R.T."/>
            <person name="Durkin A.S."/>
            <person name="Kolonay J.F."/>
            <person name="Madupu R."/>
            <person name="Daugherty S.C."/>
            <person name="Brinkac L.M."/>
            <person name="Beanan M.J."/>
            <person name="Haft D.H."/>
            <person name="Nelson W.C."/>
            <person name="Davidsen T.M."/>
            <person name="Zafar N."/>
            <person name="Zhou L."/>
            <person name="Liu J."/>
            <person name="Yuan Q."/>
            <person name="Khouri H.M."/>
            <person name="Fedorova N.B."/>
            <person name="Tran B."/>
            <person name="Russell D."/>
            <person name="Berry K.J."/>
            <person name="Utterback T.R."/>
            <person name="Van Aken S.E."/>
            <person name="Feldblyum T.V."/>
            <person name="D'Ascenzo M."/>
            <person name="Deng W.-L."/>
            <person name="Ramos A.R."/>
            <person name="Alfano J.R."/>
            <person name="Cartinhour S."/>
            <person name="Chatterjee A.K."/>
            <person name="Delaney T.P."/>
            <person name="Lazarowitz S.G."/>
            <person name="Martin G.B."/>
            <person name="Schneider D.J."/>
            <person name="Tang X."/>
            <person name="Bender C.L."/>
            <person name="White O."/>
            <person name="Fraser C.M."/>
            <person name="Collmer A."/>
        </authorList>
    </citation>
    <scope>NUCLEOTIDE SEQUENCE [LARGE SCALE GENOMIC DNA]</scope>
    <source>
        <strain>ATCC BAA-871 / DC3000</strain>
    </source>
</reference>
<feature type="chain" id="PRO_0000187529" description="Cyanate hydratase">
    <location>
        <begin position="1"/>
        <end position="155"/>
    </location>
</feature>
<feature type="active site" evidence="1">
    <location>
        <position position="95"/>
    </location>
</feature>
<feature type="active site" evidence="1">
    <location>
        <position position="98"/>
    </location>
</feature>
<feature type="active site" evidence="1">
    <location>
        <position position="121"/>
    </location>
</feature>
<evidence type="ECO:0000255" key="1">
    <source>
        <dbReference type="HAMAP-Rule" id="MF_00535"/>
    </source>
</evidence>
<comment type="function">
    <text evidence="1">Catalyzes the reaction of cyanate with bicarbonate to produce ammonia and carbon dioxide.</text>
</comment>
<comment type="catalytic activity">
    <reaction evidence="1">
        <text>cyanate + hydrogencarbonate + 3 H(+) = NH4(+) + 2 CO2</text>
        <dbReference type="Rhea" id="RHEA:11120"/>
        <dbReference type="ChEBI" id="CHEBI:15378"/>
        <dbReference type="ChEBI" id="CHEBI:16526"/>
        <dbReference type="ChEBI" id="CHEBI:17544"/>
        <dbReference type="ChEBI" id="CHEBI:28938"/>
        <dbReference type="ChEBI" id="CHEBI:29195"/>
        <dbReference type="EC" id="4.2.1.104"/>
    </reaction>
</comment>
<comment type="similarity">
    <text evidence="1">Belongs to the cyanase family.</text>
</comment>